<feature type="chain" id="PRO_0000046993" description="Protein krueppel">
    <location>
        <begin position="1" status="less than"/>
        <end position="74" status="greater than"/>
    </location>
</feature>
<feature type="zinc finger region" description="C2H2-type 1" evidence="1">
    <location>
        <begin position="1" status="less than"/>
        <end position="4"/>
    </location>
</feature>
<feature type="zinc finger region" description="C2H2-type 2" evidence="1">
    <location>
        <begin position="10"/>
        <end position="32"/>
    </location>
</feature>
<feature type="zinc finger region" description="C2H2-type 3" evidence="1">
    <location>
        <begin position="38"/>
        <end position="60"/>
    </location>
</feature>
<feature type="zinc finger region" description="C2H2-type 4" evidence="1">
    <location>
        <begin position="66"/>
        <end position="74" status="greater than"/>
    </location>
</feature>
<feature type="non-terminal residue">
    <location>
        <position position="1"/>
    </location>
</feature>
<feature type="non-terminal residue">
    <location>
        <position position="74"/>
    </location>
</feature>
<sequence>ERTHTGEKPFECPECHKRFTRDHHLKTHMRLHTGEKPYHCSHCDRQFVQVANLRRHLRVHTGERPYACELCAAK</sequence>
<proteinExistence type="inferred from homology"/>
<name>KRUP_APIME</name>
<dbReference type="EMBL" id="L01588">
    <property type="protein sequence ID" value="AAA27735.1"/>
    <property type="molecule type" value="Genomic_DNA"/>
</dbReference>
<dbReference type="SMR" id="P31507"/>
<dbReference type="STRING" id="7460.P31507"/>
<dbReference type="EnsemblMetazoa" id="NM_001252424">
    <property type="protein sequence ID" value="NP_001239353"/>
    <property type="gene ID" value="GeneID_411166"/>
</dbReference>
<dbReference type="eggNOG" id="KOG1721">
    <property type="taxonomic scope" value="Eukaryota"/>
</dbReference>
<dbReference type="InParanoid" id="P31507"/>
<dbReference type="OrthoDB" id="654211at2759"/>
<dbReference type="PhylomeDB" id="P31507"/>
<dbReference type="Proteomes" id="UP000005203">
    <property type="component" value="Unplaced"/>
</dbReference>
<dbReference type="GO" id="GO:0005634">
    <property type="term" value="C:nucleus"/>
    <property type="evidence" value="ECO:0007669"/>
    <property type="project" value="UniProtKB-SubCell"/>
</dbReference>
<dbReference type="GO" id="GO:0003677">
    <property type="term" value="F:DNA binding"/>
    <property type="evidence" value="ECO:0007669"/>
    <property type="project" value="UniProtKB-KW"/>
</dbReference>
<dbReference type="GO" id="GO:0000981">
    <property type="term" value="F:DNA-binding transcription factor activity, RNA polymerase II-specific"/>
    <property type="evidence" value="ECO:0007669"/>
    <property type="project" value="TreeGrafter"/>
</dbReference>
<dbReference type="GO" id="GO:0008270">
    <property type="term" value="F:zinc ion binding"/>
    <property type="evidence" value="ECO:0007669"/>
    <property type="project" value="UniProtKB-KW"/>
</dbReference>
<dbReference type="GO" id="GO:0035282">
    <property type="term" value="P:segmentation"/>
    <property type="evidence" value="ECO:0007669"/>
    <property type="project" value="UniProtKB-KW"/>
</dbReference>
<dbReference type="FunFam" id="3.30.160.60:FF:002343">
    <property type="entry name" value="Zinc finger protein 33A"/>
    <property type="match status" value="1"/>
</dbReference>
<dbReference type="FunFam" id="3.30.160.60:FF:001954">
    <property type="entry name" value="Zinc finger protein 787"/>
    <property type="match status" value="1"/>
</dbReference>
<dbReference type="Gene3D" id="3.30.160.60">
    <property type="entry name" value="Classic Zinc Finger"/>
    <property type="match status" value="3"/>
</dbReference>
<dbReference type="InterPro" id="IPR036236">
    <property type="entry name" value="Znf_C2H2_sf"/>
</dbReference>
<dbReference type="InterPro" id="IPR013087">
    <property type="entry name" value="Znf_C2H2_type"/>
</dbReference>
<dbReference type="PANTHER" id="PTHR24394:SF29">
    <property type="entry name" value="MYONEURIN"/>
    <property type="match status" value="1"/>
</dbReference>
<dbReference type="PANTHER" id="PTHR24394">
    <property type="entry name" value="ZINC FINGER PROTEIN"/>
    <property type="match status" value="1"/>
</dbReference>
<dbReference type="Pfam" id="PF00096">
    <property type="entry name" value="zf-C2H2"/>
    <property type="match status" value="2"/>
</dbReference>
<dbReference type="SMART" id="SM00355">
    <property type="entry name" value="ZnF_C2H2"/>
    <property type="match status" value="2"/>
</dbReference>
<dbReference type="SUPFAM" id="SSF57667">
    <property type="entry name" value="beta-beta-alpha zinc fingers"/>
    <property type="match status" value="1"/>
</dbReference>
<dbReference type="PROSITE" id="PS00028">
    <property type="entry name" value="ZINC_FINGER_C2H2_1"/>
    <property type="match status" value="2"/>
</dbReference>
<dbReference type="PROSITE" id="PS50157">
    <property type="entry name" value="ZINC_FINGER_C2H2_2"/>
    <property type="match status" value="2"/>
</dbReference>
<accession>P31507</accession>
<gene>
    <name type="primary">Kr</name>
</gene>
<organism>
    <name type="scientific">Apis mellifera</name>
    <name type="common">Honeybee</name>
    <dbReference type="NCBI Taxonomy" id="7460"/>
    <lineage>
        <taxon>Eukaryota</taxon>
        <taxon>Metazoa</taxon>
        <taxon>Ecdysozoa</taxon>
        <taxon>Arthropoda</taxon>
        <taxon>Hexapoda</taxon>
        <taxon>Insecta</taxon>
        <taxon>Pterygota</taxon>
        <taxon>Neoptera</taxon>
        <taxon>Endopterygota</taxon>
        <taxon>Hymenoptera</taxon>
        <taxon>Apocrita</taxon>
        <taxon>Aculeata</taxon>
        <taxon>Apoidea</taxon>
        <taxon>Anthophila</taxon>
        <taxon>Apidae</taxon>
        <taxon>Apis</taxon>
    </lineage>
</organism>
<reference key="1">
    <citation type="journal article" date="1992" name="Proc. Natl. Acad. Sci. U.S.A.">
        <title>Evolutionary conservation pattern of zinc-finger domains of Drosophila segmentation genes.</title>
        <authorList>
            <person name="Sommer R.J."/>
            <person name="Retzlaff M."/>
            <person name="Goerlich K."/>
            <person name="Sander K."/>
            <person name="Tautz D."/>
        </authorList>
    </citation>
    <scope>NUCLEOTIDE SEQUENCE [GENOMIC DNA]</scope>
</reference>
<keyword id="KW-0217">Developmental protein</keyword>
<keyword id="KW-0238">DNA-binding</keyword>
<keyword id="KW-0302">Gap protein</keyword>
<keyword id="KW-0479">Metal-binding</keyword>
<keyword id="KW-0539">Nucleus</keyword>
<keyword id="KW-1185">Reference proteome</keyword>
<keyword id="KW-0677">Repeat</keyword>
<keyword id="KW-0862">Zinc</keyword>
<keyword id="KW-0863">Zinc-finger</keyword>
<protein>
    <recommendedName>
        <fullName>Protein krueppel</fullName>
    </recommendedName>
</protein>
<comment type="function">
    <text>Krueppel is a gap class segmentation protein.</text>
</comment>
<comment type="subcellular location">
    <subcellularLocation>
        <location evidence="2">Nucleus</location>
    </subcellularLocation>
</comment>
<comment type="similarity">
    <text evidence="2">Belongs to the krueppel C2H2-type zinc-finger protein family.</text>
</comment>
<evidence type="ECO:0000255" key="1">
    <source>
        <dbReference type="PROSITE-ProRule" id="PRU00042"/>
    </source>
</evidence>
<evidence type="ECO:0000305" key="2"/>